<evidence type="ECO:0000255" key="1">
    <source>
        <dbReference type="PROSITE-ProRule" id="PRU01182"/>
    </source>
</evidence>
<evidence type="ECO:0000305" key="2"/>
<comment type="similarity">
    <text evidence="2">Belongs to the UPF0758 family.</text>
</comment>
<dbReference type="EMBL" id="CP000967">
    <property type="protein sequence ID" value="ACD61296.1"/>
    <property type="molecule type" value="Genomic_DNA"/>
</dbReference>
<dbReference type="SMR" id="B2SS21"/>
<dbReference type="KEGG" id="xop:PXO_02919"/>
<dbReference type="PATRIC" id="fig|291331.8.peg.553"/>
<dbReference type="eggNOG" id="COG2003">
    <property type="taxonomic scope" value="Bacteria"/>
</dbReference>
<dbReference type="HOGENOM" id="CLU_073529_0_1_6"/>
<dbReference type="Proteomes" id="UP000001740">
    <property type="component" value="Chromosome"/>
</dbReference>
<dbReference type="GO" id="GO:0046872">
    <property type="term" value="F:metal ion binding"/>
    <property type="evidence" value="ECO:0007669"/>
    <property type="project" value="UniProtKB-KW"/>
</dbReference>
<dbReference type="GO" id="GO:0008237">
    <property type="term" value="F:metallopeptidase activity"/>
    <property type="evidence" value="ECO:0007669"/>
    <property type="project" value="UniProtKB-KW"/>
</dbReference>
<dbReference type="GO" id="GO:0006508">
    <property type="term" value="P:proteolysis"/>
    <property type="evidence" value="ECO:0007669"/>
    <property type="project" value="UniProtKB-KW"/>
</dbReference>
<dbReference type="CDD" id="cd08071">
    <property type="entry name" value="MPN_DUF2466"/>
    <property type="match status" value="1"/>
</dbReference>
<dbReference type="Gene3D" id="3.40.140.10">
    <property type="entry name" value="Cytidine Deaminase, domain 2"/>
    <property type="match status" value="1"/>
</dbReference>
<dbReference type="InterPro" id="IPR037518">
    <property type="entry name" value="MPN"/>
</dbReference>
<dbReference type="InterPro" id="IPR025657">
    <property type="entry name" value="RadC_JAB"/>
</dbReference>
<dbReference type="InterPro" id="IPR010994">
    <property type="entry name" value="RuvA_2-like"/>
</dbReference>
<dbReference type="InterPro" id="IPR001405">
    <property type="entry name" value="UPF0758"/>
</dbReference>
<dbReference type="InterPro" id="IPR020891">
    <property type="entry name" value="UPF0758_CS"/>
</dbReference>
<dbReference type="InterPro" id="IPR046778">
    <property type="entry name" value="UPF0758_N"/>
</dbReference>
<dbReference type="NCBIfam" id="NF000642">
    <property type="entry name" value="PRK00024.1"/>
    <property type="match status" value="1"/>
</dbReference>
<dbReference type="NCBIfam" id="TIGR00608">
    <property type="entry name" value="radc"/>
    <property type="match status" value="1"/>
</dbReference>
<dbReference type="PANTHER" id="PTHR30471">
    <property type="entry name" value="DNA REPAIR PROTEIN RADC"/>
    <property type="match status" value="1"/>
</dbReference>
<dbReference type="PANTHER" id="PTHR30471:SF3">
    <property type="entry name" value="UPF0758 PROTEIN YEES-RELATED"/>
    <property type="match status" value="1"/>
</dbReference>
<dbReference type="Pfam" id="PF04002">
    <property type="entry name" value="RadC"/>
    <property type="match status" value="1"/>
</dbReference>
<dbReference type="Pfam" id="PF20582">
    <property type="entry name" value="UPF0758_N"/>
    <property type="match status" value="1"/>
</dbReference>
<dbReference type="SUPFAM" id="SSF47781">
    <property type="entry name" value="RuvA domain 2-like"/>
    <property type="match status" value="1"/>
</dbReference>
<dbReference type="PROSITE" id="PS50249">
    <property type="entry name" value="MPN"/>
    <property type="match status" value="1"/>
</dbReference>
<dbReference type="PROSITE" id="PS01302">
    <property type="entry name" value="UPF0758"/>
    <property type="match status" value="1"/>
</dbReference>
<proteinExistence type="inferred from homology"/>
<reference key="1">
    <citation type="journal article" date="2008" name="BMC Genomics">
        <title>Genome sequence and rapid evolution of the rice pathogen Xanthomonas oryzae pv. oryzae PXO99A.</title>
        <authorList>
            <person name="Salzberg S.L."/>
            <person name="Sommer D.D."/>
            <person name="Schatz M.C."/>
            <person name="Phillippy A.M."/>
            <person name="Rabinowicz P.D."/>
            <person name="Tsuge S."/>
            <person name="Furutani A."/>
            <person name="Ochiai H."/>
            <person name="Delcher A.L."/>
            <person name="Kelley D."/>
            <person name="Madupu R."/>
            <person name="Puiu D."/>
            <person name="Radune D."/>
            <person name="Shumway M."/>
            <person name="Trapnell C."/>
            <person name="Aparna G."/>
            <person name="Jha G."/>
            <person name="Pandey A."/>
            <person name="Patil P.B."/>
            <person name="Ishihara H."/>
            <person name="Meyer D.F."/>
            <person name="Szurek B."/>
            <person name="Verdier V."/>
            <person name="Koebnik R."/>
            <person name="Dow J.M."/>
            <person name="Ryan R.P."/>
            <person name="Hirata H."/>
            <person name="Tsuyumu S."/>
            <person name="Won Lee S."/>
            <person name="Seo Y.-S."/>
            <person name="Sriariyanum M."/>
            <person name="Ronald P.C."/>
            <person name="Sonti R.V."/>
            <person name="Van Sluys M.-A."/>
            <person name="Leach J.E."/>
            <person name="White F.F."/>
            <person name="Bogdanove A.J."/>
        </authorList>
    </citation>
    <scope>NUCLEOTIDE SEQUENCE [LARGE SCALE GENOMIC DNA]</scope>
    <source>
        <strain>PXO99A</strain>
    </source>
</reference>
<protein>
    <recommendedName>
        <fullName>UPF0758 protein PXO_02919</fullName>
    </recommendedName>
</protein>
<accession>B2SS21</accession>
<feature type="chain" id="PRO_1000089872" description="UPF0758 protein PXO_02919">
    <location>
        <begin position="1"/>
        <end position="225"/>
    </location>
</feature>
<feature type="domain" description="MPN" evidence="1">
    <location>
        <begin position="102"/>
        <end position="224"/>
    </location>
</feature>
<feature type="short sequence motif" description="JAMM motif" evidence="1">
    <location>
        <begin position="173"/>
        <end position="186"/>
    </location>
</feature>
<feature type="binding site" evidence="1">
    <location>
        <position position="173"/>
    </location>
    <ligand>
        <name>Zn(2+)</name>
        <dbReference type="ChEBI" id="CHEBI:29105"/>
        <note>catalytic</note>
    </ligand>
</feature>
<feature type="binding site" evidence="1">
    <location>
        <position position="175"/>
    </location>
    <ligand>
        <name>Zn(2+)</name>
        <dbReference type="ChEBI" id="CHEBI:29105"/>
        <note>catalytic</note>
    </ligand>
</feature>
<feature type="binding site" evidence="1">
    <location>
        <position position="186"/>
    </location>
    <ligand>
        <name>Zn(2+)</name>
        <dbReference type="ChEBI" id="CHEBI:29105"/>
        <note>catalytic</note>
    </ligand>
</feature>
<name>Y2919_XANOP</name>
<gene>
    <name type="ordered locus">PXO_02919</name>
</gene>
<keyword id="KW-0378">Hydrolase</keyword>
<keyword id="KW-0479">Metal-binding</keyword>
<keyword id="KW-0482">Metalloprotease</keyword>
<keyword id="KW-0645">Protease</keyword>
<keyword id="KW-0862">Zinc</keyword>
<organism>
    <name type="scientific">Xanthomonas oryzae pv. oryzae (strain PXO99A)</name>
    <dbReference type="NCBI Taxonomy" id="360094"/>
    <lineage>
        <taxon>Bacteria</taxon>
        <taxon>Pseudomonadati</taxon>
        <taxon>Pseudomonadota</taxon>
        <taxon>Gammaproteobacteria</taxon>
        <taxon>Lysobacterales</taxon>
        <taxon>Lysobacteraceae</taxon>
        <taxon>Xanthomonas</taxon>
    </lineage>
</organism>
<sequence>MHIHDWPTNERPREKLLARGATALSDAELLAIFVGSGLRGQDAVQTARDLLHRHGPLRPLLDRPAKALERLPGLGPASACKLAAALELAHRHLMSALERGEALSDPPSVGRYFSQRLRARAYEVFAVLFLDNRHRAIAFEELFTGTIDGADIHPREVVRRALLHNAAAVIVGHNHPSGNPEPSKADRAVTKRLLDSLELVDIRLLDHFVIGDGRPVSLAERGWLE</sequence>